<feature type="chain" id="PRO_0000321049" description="Protein translocase subunit SecA">
    <location>
        <begin position="1"/>
        <end position="914"/>
    </location>
</feature>
<feature type="binding site" evidence="1">
    <location>
        <position position="87"/>
    </location>
    <ligand>
        <name>ATP</name>
        <dbReference type="ChEBI" id="CHEBI:30616"/>
    </ligand>
</feature>
<feature type="binding site" evidence="1">
    <location>
        <begin position="105"/>
        <end position="109"/>
    </location>
    <ligand>
        <name>ATP</name>
        <dbReference type="ChEBI" id="CHEBI:30616"/>
    </ligand>
</feature>
<feature type="binding site" evidence="1">
    <location>
        <position position="508"/>
    </location>
    <ligand>
        <name>ATP</name>
        <dbReference type="ChEBI" id="CHEBI:30616"/>
    </ligand>
</feature>
<feature type="binding site" evidence="1">
    <location>
        <position position="898"/>
    </location>
    <ligand>
        <name>Zn(2+)</name>
        <dbReference type="ChEBI" id="CHEBI:29105"/>
    </ligand>
</feature>
<feature type="binding site" evidence="1">
    <location>
        <position position="900"/>
    </location>
    <ligand>
        <name>Zn(2+)</name>
        <dbReference type="ChEBI" id="CHEBI:29105"/>
    </ligand>
</feature>
<feature type="binding site" evidence="1">
    <location>
        <position position="909"/>
    </location>
    <ligand>
        <name>Zn(2+)</name>
        <dbReference type="ChEBI" id="CHEBI:29105"/>
    </ligand>
</feature>
<feature type="binding site" evidence="1">
    <location>
        <position position="910"/>
    </location>
    <ligand>
        <name>Zn(2+)</name>
        <dbReference type="ChEBI" id="CHEBI:29105"/>
    </ligand>
</feature>
<organism>
    <name type="scientific">Xylella fastidiosa (strain Temecula1 / ATCC 700964)</name>
    <dbReference type="NCBI Taxonomy" id="183190"/>
    <lineage>
        <taxon>Bacteria</taxon>
        <taxon>Pseudomonadati</taxon>
        <taxon>Pseudomonadota</taxon>
        <taxon>Gammaproteobacteria</taxon>
        <taxon>Lysobacterales</taxon>
        <taxon>Lysobacteraceae</taxon>
        <taxon>Xylella</taxon>
    </lineage>
</organism>
<gene>
    <name evidence="1" type="primary">secA</name>
    <name type="ordered locus">PD_1857</name>
</gene>
<protein>
    <recommendedName>
        <fullName evidence="1">Protein translocase subunit SecA</fullName>
        <ecNumber evidence="1">7.4.2.8</ecNumber>
    </recommendedName>
</protein>
<comment type="function">
    <text evidence="1">Part of the Sec protein translocase complex. Interacts with the SecYEG preprotein conducting channel. Has a central role in coupling the hydrolysis of ATP to the transfer of proteins into and across the cell membrane, serving both as a receptor for the preprotein-SecB complex and as an ATP-driven molecular motor driving the stepwise translocation of polypeptide chains across the membrane.</text>
</comment>
<comment type="catalytic activity">
    <reaction evidence="1">
        <text>ATP + H2O + cellular proteinSide 1 = ADP + phosphate + cellular proteinSide 2.</text>
        <dbReference type="EC" id="7.4.2.8"/>
    </reaction>
</comment>
<comment type="cofactor">
    <cofactor evidence="1">
        <name>Zn(2+)</name>
        <dbReference type="ChEBI" id="CHEBI:29105"/>
    </cofactor>
    <text evidence="1">May bind 1 zinc ion per subunit.</text>
</comment>
<comment type="subunit">
    <text evidence="1">Monomer and homodimer. Part of the essential Sec protein translocation apparatus which comprises SecA, SecYEG and auxiliary proteins SecDF-YajC and YidC.</text>
</comment>
<comment type="subcellular location">
    <subcellularLocation>
        <location evidence="1">Cell inner membrane</location>
        <topology evidence="1">Peripheral membrane protein</topology>
        <orientation evidence="1">Cytoplasmic side</orientation>
    </subcellularLocation>
    <subcellularLocation>
        <location evidence="1">Cytoplasm</location>
    </subcellularLocation>
    <text evidence="1">Distribution is 50-50.</text>
</comment>
<comment type="similarity">
    <text evidence="1">Belongs to the SecA family.</text>
</comment>
<keyword id="KW-0067">ATP-binding</keyword>
<keyword id="KW-0997">Cell inner membrane</keyword>
<keyword id="KW-1003">Cell membrane</keyword>
<keyword id="KW-0963">Cytoplasm</keyword>
<keyword id="KW-0472">Membrane</keyword>
<keyword id="KW-0479">Metal-binding</keyword>
<keyword id="KW-0547">Nucleotide-binding</keyword>
<keyword id="KW-0653">Protein transport</keyword>
<keyword id="KW-1185">Reference proteome</keyword>
<keyword id="KW-1278">Translocase</keyword>
<keyword id="KW-0811">Translocation</keyword>
<keyword id="KW-0813">Transport</keyword>
<keyword id="KW-0862">Zinc</keyword>
<proteinExistence type="inferred from homology"/>
<sequence>MINSLLTRLFGSRNERQLRQLNSIVAKINALEAELQKLSDTALQAKTTEFKQSIQDGKSLDKLLPEAFAVCREASRRVLGMRHYDVQLIGGMVLHLGKIAEMRTGEGKTLVATLPVYLNALAGKGVHVVTVNDYLARRDAAHMGRLYNWLGLSVGVVYPGMPHSDKHAAYGADITYGTNNEFGFDYLRDNMALSKADRYQRGLHYAIVDEVDSILIDEARTPLIISGPADESPDLYIRVNRIIPHLTRQENEEAEGDYWVDEKGKQVHLSEVGMERAEDLLRQAGILEEGDDSLYAAQNLSVVHHLNAALRAHALYQRDVDYIVRDGEVVIVDEFTGRTLAGRRWSDGLHQAIEAKEGVPVQRENQTLASITFQNLFRIYKKLSGMTGTADTEAYEFQSIYGLEVMVIPTNRPTVRKDYPDQVFLNRSSKFNAVLEDIKDCAKRGQPVLVGTTSIEISEMLSEHLRKARVKHEVLNAKQHEREATIVANAGLPGAVTIATNMAGRGTDIVLGGSLDTVLAELDPDATEEDRFRVKTAWNRRHEAVKAAGGLHIIGTERHESRRIDNQLRGRAGRQGDPGSSRFYLSLEDSLMRIFASEWVQKVMRLMGMKEGDVIEDRRVTRQIERAQRKVEAHNFDIRKNLLDYDDVNNEQRKVVYAQRDELLDAESIKENIDSIRHEVIDALVTRFVPEHSIDEQWDLPGLQATLQSEWGLHLPLIEMLKGREEVDAERIAFLVQDAVDKHCAEREASIGAETMRALEKHVMLTVLDQGWKEHLATMDYLRQGIHLRGYAQKQPKQEYKREAFELFSEMLEHVKREVIASLARVRIRSEEEMAALEEQERRQVDTLLRQSQFQHQEAGGYGTGDEAVSLQRQPAGQRAAIAQVIRDTPKVGRNDPCPCGSGKKYKHCHGLVT</sequence>
<name>SECA_XYLFT</name>
<evidence type="ECO:0000255" key="1">
    <source>
        <dbReference type="HAMAP-Rule" id="MF_01382"/>
    </source>
</evidence>
<dbReference type="EC" id="7.4.2.8" evidence="1"/>
<dbReference type="EMBL" id="AE009442">
    <property type="protein sequence ID" value="AAO29689.1"/>
    <property type="molecule type" value="Genomic_DNA"/>
</dbReference>
<dbReference type="RefSeq" id="WP_004090521.1">
    <property type="nucleotide sequence ID" value="NC_004556.1"/>
</dbReference>
<dbReference type="SMR" id="Q87AG8"/>
<dbReference type="GeneID" id="93905716"/>
<dbReference type="KEGG" id="xft:PD_1857"/>
<dbReference type="HOGENOM" id="CLU_005314_3_0_6"/>
<dbReference type="Proteomes" id="UP000002516">
    <property type="component" value="Chromosome"/>
</dbReference>
<dbReference type="GO" id="GO:0031522">
    <property type="term" value="C:cell envelope Sec protein transport complex"/>
    <property type="evidence" value="ECO:0007669"/>
    <property type="project" value="TreeGrafter"/>
</dbReference>
<dbReference type="GO" id="GO:0005829">
    <property type="term" value="C:cytosol"/>
    <property type="evidence" value="ECO:0007669"/>
    <property type="project" value="TreeGrafter"/>
</dbReference>
<dbReference type="GO" id="GO:0005886">
    <property type="term" value="C:plasma membrane"/>
    <property type="evidence" value="ECO:0007669"/>
    <property type="project" value="UniProtKB-SubCell"/>
</dbReference>
<dbReference type="GO" id="GO:0005524">
    <property type="term" value="F:ATP binding"/>
    <property type="evidence" value="ECO:0007669"/>
    <property type="project" value="UniProtKB-UniRule"/>
</dbReference>
<dbReference type="GO" id="GO:0046872">
    <property type="term" value="F:metal ion binding"/>
    <property type="evidence" value="ECO:0007669"/>
    <property type="project" value="UniProtKB-KW"/>
</dbReference>
<dbReference type="GO" id="GO:0008564">
    <property type="term" value="F:protein-exporting ATPase activity"/>
    <property type="evidence" value="ECO:0007669"/>
    <property type="project" value="UniProtKB-EC"/>
</dbReference>
<dbReference type="GO" id="GO:0065002">
    <property type="term" value="P:intracellular protein transmembrane transport"/>
    <property type="evidence" value="ECO:0007669"/>
    <property type="project" value="UniProtKB-UniRule"/>
</dbReference>
<dbReference type="GO" id="GO:0017038">
    <property type="term" value="P:protein import"/>
    <property type="evidence" value="ECO:0007669"/>
    <property type="project" value="InterPro"/>
</dbReference>
<dbReference type="GO" id="GO:0006605">
    <property type="term" value="P:protein targeting"/>
    <property type="evidence" value="ECO:0007669"/>
    <property type="project" value="UniProtKB-UniRule"/>
</dbReference>
<dbReference type="GO" id="GO:0043952">
    <property type="term" value="P:protein transport by the Sec complex"/>
    <property type="evidence" value="ECO:0007669"/>
    <property type="project" value="TreeGrafter"/>
</dbReference>
<dbReference type="CDD" id="cd17928">
    <property type="entry name" value="DEXDc_SecA"/>
    <property type="match status" value="1"/>
</dbReference>
<dbReference type="CDD" id="cd18803">
    <property type="entry name" value="SF2_C_secA"/>
    <property type="match status" value="1"/>
</dbReference>
<dbReference type="FunFam" id="3.40.50.300:FF:000113">
    <property type="entry name" value="Preprotein translocase subunit SecA"/>
    <property type="match status" value="1"/>
</dbReference>
<dbReference type="FunFam" id="3.90.1440.10:FF:000001">
    <property type="entry name" value="Preprotein translocase subunit SecA"/>
    <property type="match status" value="1"/>
</dbReference>
<dbReference type="FunFam" id="1.10.3060.10:FF:000003">
    <property type="entry name" value="Protein translocase subunit SecA"/>
    <property type="match status" value="1"/>
</dbReference>
<dbReference type="FunFam" id="3.40.50.300:FF:000334">
    <property type="entry name" value="Protein translocase subunit SecA"/>
    <property type="match status" value="1"/>
</dbReference>
<dbReference type="Gene3D" id="1.10.3060.10">
    <property type="entry name" value="Helical scaffold and wing domains of SecA"/>
    <property type="match status" value="1"/>
</dbReference>
<dbReference type="Gene3D" id="3.40.50.300">
    <property type="entry name" value="P-loop containing nucleotide triphosphate hydrolases"/>
    <property type="match status" value="2"/>
</dbReference>
<dbReference type="Gene3D" id="3.90.1440.10">
    <property type="entry name" value="SecA, preprotein cross-linking domain"/>
    <property type="match status" value="1"/>
</dbReference>
<dbReference type="HAMAP" id="MF_01382">
    <property type="entry name" value="SecA"/>
    <property type="match status" value="1"/>
</dbReference>
<dbReference type="InterPro" id="IPR014001">
    <property type="entry name" value="Helicase_ATP-bd"/>
</dbReference>
<dbReference type="InterPro" id="IPR001650">
    <property type="entry name" value="Helicase_C-like"/>
</dbReference>
<dbReference type="InterPro" id="IPR027417">
    <property type="entry name" value="P-loop_NTPase"/>
</dbReference>
<dbReference type="InterPro" id="IPR004027">
    <property type="entry name" value="SEC_C_motif"/>
</dbReference>
<dbReference type="InterPro" id="IPR000185">
    <property type="entry name" value="SecA"/>
</dbReference>
<dbReference type="InterPro" id="IPR020937">
    <property type="entry name" value="SecA_CS"/>
</dbReference>
<dbReference type="InterPro" id="IPR011115">
    <property type="entry name" value="SecA_DEAD"/>
</dbReference>
<dbReference type="InterPro" id="IPR014018">
    <property type="entry name" value="SecA_motor_DEAD"/>
</dbReference>
<dbReference type="InterPro" id="IPR011130">
    <property type="entry name" value="SecA_preprotein_X-link_dom"/>
</dbReference>
<dbReference type="InterPro" id="IPR044722">
    <property type="entry name" value="SecA_SF2_C"/>
</dbReference>
<dbReference type="InterPro" id="IPR011116">
    <property type="entry name" value="SecA_Wing/Scaffold"/>
</dbReference>
<dbReference type="InterPro" id="IPR036266">
    <property type="entry name" value="SecA_Wing/Scaffold_sf"/>
</dbReference>
<dbReference type="InterPro" id="IPR036670">
    <property type="entry name" value="SecA_X-link_sf"/>
</dbReference>
<dbReference type="NCBIfam" id="NF009538">
    <property type="entry name" value="PRK12904.1"/>
    <property type="match status" value="1"/>
</dbReference>
<dbReference type="NCBIfam" id="TIGR00963">
    <property type="entry name" value="secA"/>
    <property type="match status" value="1"/>
</dbReference>
<dbReference type="PANTHER" id="PTHR30612:SF0">
    <property type="entry name" value="CHLOROPLAST PROTEIN-TRANSPORTING ATPASE"/>
    <property type="match status" value="1"/>
</dbReference>
<dbReference type="PANTHER" id="PTHR30612">
    <property type="entry name" value="SECA INNER MEMBRANE COMPONENT OF SEC PROTEIN SECRETION SYSTEM"/>
    <property type="match status" value="1"/>
</dbReference>
<dbReference type="Pfam" id="PF21090">
    <property type="entry name" value="P-loop_SecA"/>
    <property type="match status" value="1"/>
</dbReference>
<dbReference type="Pfam" id="PF02810">
    <property type="entry name" value="SEC-C"/>
    <property type="match status" value="1"/>
</dbReference>
<dbReference type="Pfam" id="PF07517">
    <property type="entry name" value="SecA_DEAD"/>
    <property type="match status" value="1"/>
</dbReference>
<dbReference type="Pfam" id="PF01043">
    <property type="entry name" value="SecA_PP_bind"/>
    <property type="match status" value="1"/>
</dbReference>
<dbReference type="Pfam" id="PF07516">
    <property type="entry name" value="SecA_SW"/>
    <property type="match status" value="1"/>
</dbReference>
<dbReference type="PRINTS" id="PR00906">
    <property type="entry name" value="SECA"/>
</dbReference>
<dbReference type="SMART" id="SM00957">
    <property type="entry name" value="SecA_DEAD"/>
    <property type="match status" value="1"/>
</dbReference>
<dbReference type="SMART" id="SM00958">
    <property type="entry name" value="SecA_PP_bind"/>
    <property type="match status" value="1"/>
</dbReference>
<dbReference type="SUPFAM" id="SSF81886">
    <property type="entry name" value="Helical scaffold and wing domains of SecA"/>
    <property type="match status" value="1"/>
</dbReference>
<dbReference type="SUPFAM" id="SSF52540">
    <property type="entry name" value="P-loop containing nucleoside triphosphate hydrolases"/>
    <property type="match status" value="2"/>
</dbReference>
<dbReference type="SUPFAM" id="SSF81767">
    <property type="entry name" value="Pre-protein crosslinking domain of SecA"/>
    <property type="match status" value="1"/>
</dbReference>
<dbReference type="PROSITE" id="PS01312">
    <property type="entry name" value="SECA"/>
    <property type="match status" value="1"/>
</dbReference>
<dbReference type="PROSITE" id="PS51196">
    <property type="entry name" value="SECA_MOTOR_DEAD"/>
    <property type="match status" value="1"/>
</dbReference>
<accession>Q87AG8</accession>
<reference key="1">
    <citation type="journal article" date="2003" name="J. Bacteriol.">
        <title>Comparative analyses of the complete genome sequences of Pierce's disease and citrus variegated chlorosis strains of Xylella fastidiosa.</title>
        <authorList>
            <person name="Van Sluys M.A."/>
            <person name="de Oliveira M.C."/>
            <person name="Monteiro-Vitorello C.B."/>
            <person name="Miyaki C.Y."/>
            <person name="Furlan L.R."/>
            <person name="Camargo L.E.A."/>
            <person name="da Silva A.C.R."/>
            <person name="Moon D.H."/>
            <person name="Takita M.A."/>
            <person name="Lemos E.G.M."/>
            <person name="Machado M.A."/>
            <person name="Ferro M.I.T."/>
            <person name="da Silva F.R."/>
            <person name="Goldman M.H.S."/>
            <person name="Goldman G.H."/>
            <person name="Lemos M.V.F."/>
            <person name="El-Dorry H."/>
            <person name="Tsai S.M."/>
            <person name="Carrer H."/>
            <person name="Carraro D.M."/>
            <person name="de Oliveira R.C."/>
            <person name="Nunes L.R."/>
            <person name="Siqueira W.J."/>
            <person name="Coutinho L.L."/>
            <person name="Kimura E.T."/>
            <person name="Ferro E.S."/>
            <person name="Harakava R."/>
            <person name="Kuramae E.E."/>
            <person name="Marino C.L."/>
            <person name="Giglioti E."/>
            <person name="Abreu I.L."/>
            <person name="Alves L.M.C."/>
            <person name="do Amaral A.M."/>
            <person name="Baia G.S."/>
            <person name="Blanco S.R."/>
            <person name="Brito M.S."/>
            <person name="Cannavan F.S."/>
            <person name="Celestino A.V."/>
            <person name="da Cunha A.F."/>
            <person name="Fenille R.C."/>
            <person name="Ferro J.A."/>
            <person name="Formighieri E.F."/>
            <person name="Kishi L.T."/>
            <person name="Leoni S.G."/>
            <person name="Oliveira A.R."/>
            <person name="Rosa V.E. Jr."/>
            <person name="Sassaki F.T."/>
            <person name="Sena J.A.D."/>
            <person name="de Souza A.A."/>
            <person name="Truffi D."/>
            <person name="Tsukumo F."/>
            <person name="Yanai G.M."/>
            <person name="Zaros L.G."/>
            <person name="Civerolo E.L."/>
            <person name="Simpson A.J.G."/>
            <person name="Almeida N.F. Jr."/>
            <person name="Setubal J.C."/>
            <person name="Kitajima J.P."/>
        </authorList>
    </citation>
    <scope>NUCLEOTIDE SEQUENCE [LARGE SCALE GENOMIC DNA]</scope>
    <source>
        <strain>Temecula1 / ATCC 700964</strain>
    </source>
</reference>